<accession>W0T3G1</accession>
<dbReference type="EMBL" id="AP012213">
    <property type="protein sequence ID" value="BAO38147.1"/>
    <property type="molecule type" value="Genomic_DNA"/>
</dbReference>
<dbReference type="SMR" id="W0T3G1"/>
<dbReference type="VEuPathDB" id="FungiDB:KLMA_10525"/>
<dbReference type="OrthoDB" id="4065598at2759"/>
<dbReference type="Proteomes" id="UP000065495">
    <property type="component" value="Chromosome 1"/>
</dbReference>
<dbReference type="GO" id="GO:0000407">
    <property type="term" value="C:phagophore assembly site"/>
    <property type="evidence" value="ECO:0007669"/>
    <property type="project" value="UniProtKB-SubCell"/>
</dbReference>
<dbReference type="GO" id="GO:0006914">
    <property type="term" value="P:autophagy"/>
    <property type="evidence" value="ECO:0007669"/>
    <property type="project" value="UniProtKB-KW"/>
</dbReference>
<dbReference type="GO" id="GO:0015031">
    <property type="term" value="P:protein transport"/>
    <property type="evidence" value="ECO:0007669"/>
    <property type="project" value="UniProtKB-KW"/>
</dbReference>
<dbReference type="Gene3D" id="2.60.270.60">
    <property type="match status" value="1"/>
</dbReference>
<dbReference type="InterPro" id="IPR018621">
    <property type="entry name" value="Atg31"/>
</dbReference>
<dbReference type="Pfam" id="PF09795">
    <property type="entry name" value="ATG31"/>
    <property type="match status" value="1"/>
</dbReference>
<proteinExistence type="inferred from homology"/>
<evidence type="ECO:0000250" key="1">
    <source>
        <dbReference type="UniProtKB" id="Q12421"/>
    </source>
</evidence>
<evidence type="ECO:0000269" key="2">
    <source>
    </source>
</evidence>
<evidence type="ECO:0000303" key="3">
    <source>
    </source>
</evidence>
<evidence type="ECO:0000305" key="4"/>
<keyword id="KW-0072">Autophagy</keyword>
<keyword id="KW-0653">Protein transport</keyword>
<keyword id="KW-0813">Transport</keyword>
<sequence>MDTPMLLVTNVNDAIQNDDLRMDSLTNENAWFLNNISYIFEDDEPIQQEDHSNYENLFIIDSDLNGKISGVELLSEKWQLLSYDQNKPYNCISLRVMDELRADLSPQDGDVKDLDSLARRYHDRNVQIRNLLDSLIQED</sequence>
<comment type="function">
    <text evidence="1 2">Plays a role in starvation-induced autophagy (PubMed:26442587). Involved in mitophagy (By similarity). Functions with ATG17 and ATG29 at the preautophagosomal structure (PAS) in order to form normal autophagosomes under starvation conditions (PubMed:26442587).</text>
</comment>
<comment type="subunit">
    <text evidence="1">Forms a stable complex with ATG17 and ATG29 (By similarity). Interacts directly with ATG29 (By similarity). The ATG17-ATG29-ATG31 complex interacts with the ATG1-ATG13 complex (By similarity). Note=The interaction with the ATG1-ATG13 complex is induced by starvation (By similarity).</text>
</comment>
<comment type="subcellular location">
    <subcellularLocation>
        <location evidence="1">Preautophagosomal structure</location>
    </subcellularLocation>
</comment>
<comment type="disruption phenotype">
    <text evidence="2">Mislocalizes ATG8 in the cytosol, when ATG11 is also deleted (PubMed:26442587).</text>
</comment>
<comment type="miscellaneous">
    <text evidence="2">Kluyveromyces marxianus proteins are shorter in length and have a more ordered secondary structure than their S.cerevisiae counterparts, which might contribute to the superior thermotolerance and solubility (PubMed:26442587). K.marxianus could be therefore useful as a new model organism for further elucidation of the molecular details of autophagy (PubMed:26442587).</text>
</comment>
<comment type="similarity">
    <text evidence="4">Belongs to the ATG31 family.</text>
</comment>
<gene>
    <name evidence="3" type="primary">ATG31</name>
    <name type="ORF">KLMA_10525</name>
</gene>
<name>ATG31_KLUMD</name>
<feature type="chain" id="PRO_0000443928" description="Autophagy-related protein 31">
    <location>
        <begin position="1"/>
        <end position="139"/>
    </location>
</feature>
<reference key="1">
    <citation type="journal article" date="2015" name="Biotechnol. Biofuels">
        <title>Genetic basis of the highly efficient yeast Kluyveromyces marxianus: complete genome sequence and transcriptome analyses.</title>
        <authorList>
            <person name="Lertwattanasakul N."/>
            <person name="Kosaka T."/>
            <person name="Hosoyama A."/>
            <person name="Suzuki Y."/>
            <person name="Rodrussamee N."/>
            <person name="Matsutani M."/>
            <person name="Murata M."/>
            <person name="Fujimoto N."/>
            <person name="Suprayogi X."/>
            <person name="Tsuchikane K."/>
            <person name="Limtong S."/>
            <person name="Fujita N."/>
            <person name="Yamada M."/>
        </authorList>
    </citation>
    <scope>NUCLEOTIDE SEQUENCE [LARGE SCALE GENOMIC DNA]</scope>
    <source>
        <strain>DMKU3-1042 / BCC 29191 / NBRC 104275</strain>
    </source>
</reference>
<reference key="2">
    <citation type="journal article" date="2015" name="J. Biol. Chem.">
        <title>The thermotolerant yeast Kluyveromyces marxianus is a useful organism for structural and biochemical studies of autophagy.</title>
        <authorList>
            <person name="Yamamoto H."/>
            <person name="Shima T."/>
            <person name="Yamaguchi M."/>
            <person name="Mochizuki Y."/>
            <person name="Hoshida H."/>
            <person name="Kakuta S."/>
            <person name="Kondo-Kakuta C."/>
            <person name="Noda N.N."/>
            <person name="Inagaki F."/>
            <person name="Itoh T."/>
            <person name="Akada R."/>
            <person name="Ohsumi Y."/>
        </authorList>
    </citation>
    <scope>IDENTIFICATION</scope>
    <scope>FUNCTION</scope>
    <scope>DISRUPTION PHENOTYPE</scope>
</reference>
<organism>
    <name type="scientific">Kluyveromyces marxianus (strain DMKU3-1042 / BCC 29191 / NBRC 104275)</name>
    <name type="common">Yeast</name>
    <name type="synonym">Candida kefyr</name>
    <dbReference type="NCBI Taxonomy" id="1003335"/>
    <lineage>
        <taxon>Eukaryota</taxon>
        <taxon>Fungi</taxon>
        <taxon>Dikarya</taxon>
        <taxon>Ascomycota</taxon>
        <taxon>Saccharomycotina</taxon>
        <taxon>Saccharomycetes</taxon>
        <taxon>Saccharomycetales</taxon>
        <taxon>Saccharomycetaceae</taxon>
        <taxon>Kluyveromyces</taxon>
    </lineage>
</organism>
<protein>
    <recommendedName>
        <fullName evidence="3">Autophagy-related protein 31</fullName>
    </recommendedName>
</protein>